<comment type="function">
    <text evidence="3 4 5">Atypical Ras-like protein that acts as a potent regulator of NF-kappa-B activity by preventing the degradation of NF-kappa-B inhibitor beta (NFKBIB) by most signals, explaining why NFKBIB is more resistant to degradation. May act by blocking phosphorylation of NFKBIB and mediating cytoplasmic retention of p65/RELA NF-kappa-B subunit. It is unclear whether it acts as a GTPase. Both GTP- and GDP-bound forms block phosphorylation of NFKBIB.</text>
</comment>
<comment type="subunit">
    <text evidence="3 4 5">Interacts with both NF-kappa-B inhibitor alpha (NFKBIA) and beta (NFKBIB) in vitro. However, it probably only interacts with NFKBIB in vivo. Forms a complex with NFKBIB and NF-kappa-B heterodimer (p50/NFKB1 and p65/RELA). Also interacts with c-Rel (REL).</text>
</comment>
<comment type="subcellular location">
    <subcellularLocation>
        <location evidence="5">Cytoplasm</location>
    </subcellularLocation>
</comment>
<comment type="tissue specificity">
    <text evidence="3">Widely expressed.</text>
</comment>
<comment type="domain">
    <text>In contrast to other members of the Ras family, the members of the KappaB-Ras subfamily do not contain the conserved Gly and Gln residues in positions 13 and 65, which are replaced by Leu residues, and are therefore similar to the constitutively active forms of oncogenic forms of Ras. This suggests that members of this family are clearly different from other small GTPases proteins.</text>
</comment>
<comment type="similarity">
    <text evidence="6">Belongs to the small GTPase superfamily. Ras family. KappaB-Ras subfamily.</text>
</comment>
<keyword id="KW-0963">Cytoplasm</keyword>
<keyword id="KW-0342">GTP-binding</keyword>
<keyword id="KW-0547">Nucleotide-binding</keyword>
<keyword id="KW-1267">Proteomics identification</keyword>
<keyword id="KW-1185">Reference proteome</keyword>
<feature type="chain" id="PRO_0000225675" description="NF-kappa-B inhibitor-interacting Ras-like protein 1">
    <location>
        <begin position="1"/>
        <end position="192"/>
    </location>
</feature>
<feature type="region of interest" description="Interactions with NFKBIA and NFKBIB">
    <location>
        <begin position="58"/>
        <end position="93"/>
    </location>
</feature>
<feature type="region of interest" description="Disordered" evidence="2">
    <location>
        <begin position="168"/>
        <end position="192"/>
    </location>
</feature>
<feature type="short sequence motif" description="Effector region">
    <location>
        <begin position="35"/>
        <end position="43"/>
    </location>
</feature>
<feature type="binding site" evidence="1">
    <location>
        <begin position="11"/>
        <end position="18"/>
    </location>
    <ligand>
        <name>GTP</name>
        <dbReference type="ChEBI" id="CHEBI:37565"/>
    </ligand>
</feature>
<feature type="binding site" evidence="1">
    <location>
        <begin position="61"/>
        <end position="65"/>
    </location>
    <ligand>
        <name>GTP</name>
        <dbReference type="ChEBI" id="CHEBI:37565"/>
    </ligand>
</feature>
<feature type="binding site" evidence="1">
    <location>
        <begin position="120"/>
        <end position="123"/>
    </location>
    <ligand>
        <name>GTP</name>
        <dbReference type="ChEBI" id="CHEBI:37565"/>
    </ligand>
</feature>
<feature type="mutagenesis site" description="Loss of function." evidence="5">
    <original>T</original>
    <variation>A</variation>
    <location>
        <position position="38"/>
    </location>
</feature>
<feature type="sequence conflict" description="In Ref. 2; BAB55341." evidence="6" ref="2">
    <original>Q</original>
    <variation>R</variation>
    <location>
        <position position="95"/>
    </location>
</feature>
<gene>
    <name type="primary">NKIRAS1</name>
    <name type="synonym">KBRAS1</name>
</gene>
<reference key="1">
    <citation type="journal article" date="2000" name="Science">
        <title>A subclass of Ras proteins that regulate the degradation of IkappaB.</title>
        <authorList>
            <person name="Fenwick C."/>
            <person name="Na S.-Y."/>
            <person name="Voll R.E."/>
            <person name="Zhong H."/>
            <person name="Im S.-Y."/>
            <person name="Lee J.W."/>
            <person name="Ghosh S."/>
        </authorList>
    </citation>
    <scope>NUCLEOTIDE SEQUENCE [MRNA]</scope>
    <scope>FUNCTION</scope>
    <scope>TISSUE SPECIFICITY</scope>
    <scope>GTP-BINDING</scope>
    <scope>INTERACTION WITH NFKBIA AND NFKBIB</scope>
</reference>
<reference key="2">
    <citation type="journal article" date="2004" name="Nat. Genet.">
        <title>Complete sequencing and characterization of 21,243 full-length human cDNAs.</title>
        <authorList>
            <person name="Ota T."/>
            <person name="Suzuki Y."/>
            <person name="Nishikawa T."/>
            <person name="Otsuki T."/>
            <person name="Sugiyama T."/>
            <person name="Irie R."/>
            <person name="Wakamatsu A."/>
            <person name="Hayashi K."/>
            <person name="Sato H."/>
            <person name="Nagai K."/>
            <person name="Kimura K."/>
            <person name="Makita H."/>
            <person name="Sekine M."/>
            <person name="Obayashi M."/>
            <person name="Nishi T."/>
            <person name="Shibahara T."/>
            <person name="Tanaka T."/>
            <person name="Ishii S."/>
            <person name="Yamamoto J."/>
            <person name="Saito K."/>
            <person name="Kawai Y."/>
            <person name="Isono Y."/>
            <person name="Nakamura Y."/>
            <person name="Nagahari K."/>
            <person name="Murakami K."/>
            <person name="Yasuda T."/>
            <person name="Iwayanagi T."/>
            <person name="Wagatsuma M."/>
            <person name="Shiratori A."/>
            <person name="Sudo H."/>
            <person name="Hosoiri T."/>
            <person name="Kaku Y."/>
            <person name="Kodaira H."/>
            <person name="Kondo H."/>
            <person name="Sugawara M."/>
            <person name="Takahashi M."/>
            <person name="Kanda K."/>
            <person name="Yokoi T."/>
            <person name="Furuya T."/>
            <person name="Kikkawa E."/>
            <person name="Omura Y."/>
            <person name="Abe K."/>
            <person name="Kamihara K."/>
            <person name="Katsuta N."/>
            <person name="Sato K."/>
            <person name="Tanikawa M."/>
            <person name="Yamazaki M."/>
            <person name="Ninomiya K."/>
            <person name="Ishibashi T."/>
            <person name="Yamashita H."/>
            <person name="Murakawa K."/>
            <person name="Fujimori K."/>
            <person name="Tanai H."/>
            <person name="Kimata M."/>
            <person name="Watanabe M."/>
            <person name="Hiraoka S."/>
            <person name="Chiba Y."/>
            <person name="Ishida S."/>
            <person name="Ono Y."/>
            <person name="Takiguchi S."/>
            <person name="Watanabe S."/>
            <person name="Yosida M."/>
            <person name="Hotuta T."/>
            <person name="Kusano J."/>
            <person name="Kanehori K."/>
            <person name="Takahashi-Fujii A."/>
            <person name="Hara H."/>
            <person name="Tanase T.-O."/>
            <person name="Nomura Y."/>
            <person name="Togiya S."/>
            <person name="Komai F."/>
            <person name="Hara R."/>
            <person name="Takeuchi K."/>
            <person name="Arita M."/>
            <person name="Imose N."/>
            <person name="Musashino K."/>
            <person name="Yuuki H."/>
            <person name="Oshima A."/>
            <person name="Sasaki N."/>
            <person name="Aotsuka S."/>
            <person name="Yoshikawa Y."/>
            <person name="Matsunawa H."/>
            <person name="Ichihara T."/>
            <person name="Shiohata N."/>
            <person name="Sano S."/>
            <person name="Moriya S."/>
            <person name="Momiyama H."/>
            <person name="Satoh N."/>
            <person name="Takami S."/>
            <person name="Terashima Y."/>
            <person name="Suzuki O."/>
            <person name="Nakagawa S."/>
            <person name="Senoh A."/>
            <person name="Mizoguchi H."/>
            <person name="Goto Y."/>
            <person name="Shimizu F."/>
            <person name="Wakebe H."/>
            <person name="Hishigaki H."/>
            <person name="Watanabe T."/>
            <person name="Sugiyama A."/>
            <person name="Takemoto M."/>
            <person name="Kawakami B."/>
            <person name="Yamazaki M."/>
            <person name="Watanabe K."/>
            <person name="Kumagai A."/>
            <person name="Itakura S."/>
            <person name="Fukuzumi Y."/>
            <person name="Fujimori Y."/>
            <person name="Komiyama M."/>
            <person name="Tashiro H."/>
            <person name="Tanigami A."/>
            <person name="Fujiwara T."/>
            <person name="Ono T."/>
            <person name="Yamada K."/>
            <person name="Fujii Y."/>
            <person name="Ozaki K."/>
            <person name="Hirao M."/>
            <person name="Ohmori Y."/>
            <person name="Kawabata A."/>
            <person name="Hikiji T."/>
            <person name="Kobatake N."/>
            <person name="Inagaki H."/>
            <person name="Ikema Y."/>
            <person name="Okamoto S."/>
            <person name="Okitani R."/>
            <person name="Kawakami T."/>
            <person name="Noguchi S."/>
            <person name="Itoh T."/>
            <person name="Shigeta K."/>
            <person name="Senba T."/>
            <person name="Matsumura K."/>
            <person name="Nakajima Y."/>
            <person name="Mizuno T."/>
            <person name="Morinaga M."/>
            <person name="Sasaki M."/>
            <person name="Togashi T."/>
            <person name="Oyama M."/>
            <person name="Hata H."/>
            <person name="Watanabe M."/>
            <person name="Komatsu T."/>
            <person name="Mizushima-Sugano J."/>
            <person name="Satoh T."/>
            <person name="Shirai Y."/>
            <person name="Takahashi Y."/>
            <person name="Nakagawa K."/>
            <person name="Okumura K."/>
            <person name="Nagase T."/>
            <person name="Nomura N."/>
            <person name="Kikuchi H."/>
            <person name="Masuho Y."/>
            <person name="Yamashita R."/>
            <person name="Nakai K."/>
            <person name="Yada T."/>
            <person name="Nakamura Y."/>
            <person name="Ohara O."/>
            <person name="Isogai T."/>
            <person name="Sugano S."/>
        </authorList>
    </citation>
    <scope>NUCLEOTIDE SEQUENCE [LARGE SCALE MRNA]</scope>
    <source>
        <tissue>Placenta</tissue>
    </source>
</reference>
<reference key="3">
    <citation type="submission" date="2005-12" db="EMBL/GenBank/DDBJ databases">
        <authorList>
            <consortium name="NHLBI resequencing and genotyping service (RS&amp;G)"/>
        </authorList>
    </citation>
    <scope>NUCLEOTIDE SEQUENCE [GENOMIC DNA]</scope>
</reference>
<reference key="4">
    <citation type="journal article" date="2004" name="Genome Res.">
        <title>The status, quality, and expansion of the NIH full-length cDNA project: the Mammalian Gene Collection (MGC).</title>
        <authorList>
            <consortium name="The MGC Project Team"/>
        </authorList>
    </citation>
    <scope>NUCLEOTIDE SEQUENCE [LARGE SCALE MRNA]</scope>
    <source>
        <tissue>Brain</tissue>
        <tissue>Lung</tissue>
    </source>
</reference>
<reference key="5">
    <citation type="journal article" date="2003" name="J. Biol. Chem.">
        <title>KappaB-Ras binds to the unique insert within the ankyrin repeat domain of IkappaBbeta and regulates cytoplasmic retention of IkappaBbeta.NF-kappaB complexes.</title>
        <authorList>
            <person name="Chen Y."/>
            <person name="Wu J."/>
            <person name="Ghosh G."/>
        </authorList>
    </citation>
    <scope>FUNCTION</scope>
    <scope>INTERACTION WITH NFKBIB</scope>
</reference>
<reference key="6">
    <citation type="journal article" date="2004" name="Mol. Cell. Biol.">
        <title>Inhibition of NF-kappaB activity by IkappaBbeta in association with kappaB-Ras.</title>
        <authorList>
            <person name="Chen Y."/>
            <person name="Vallee S."/>
            <person name="Wu J."/>
            <person name="Vu D."/>
            <person name="Sondek J."/>
            <person name="Ghosh G."/>
        </authorList>
    </citation>
    <scope>FUNCTION</scope>
    <scope>SUBCELLULAR LOCATION</scope>
    <scope>INTERACTION WITH REL</scope>
    <scope>MUTAGENESIS OF THR-38</scope>
</reference>
<dbReference type="EMBL" id="AF229839">
    <property type="protein sequence ID" value="AAF34998.1"/>
    <property type="molecule type" value="mRNA"/>
</dbReference>
<dbReference type="EMBL" id="AK027749">
    <property type="protein sequence ID" value="BAB55341.1"/>
    <property type="molecule type" value="mRNA"/>
</dbReference>
<dbReference type="EMBL" id="DQ314881">
    <property type="protein sequence ID" value="ABC40740.1"/>
    <property type="molecule type" value="Genomic_DNA"/>
</dbReference>
<dbReference type="EMBL" id="BC066940">
    <property type="protein sequence ID" value="AAH66940.1"/>
    <property type="molecule type" value="mRNA"/>
</dbReference>
<dbReference type="EMBL" id="BC012145">
    <property type="protein sequence ID" value="AAH12145.1"/>
    <property type="molecule type" value="mRNA"/>
</dbReference>
<dbReference type="CCDS" id="CCDS33717.1"/>
<dbReference type="RefSeq" id="NP_001364280.1">
    <property type="nucleotide sequence ID" value="NM_001377351.1"/>
</dbReference>
<dbReference type="RefSeq" id="NP_001364281.1">
    <property type="nucleotide sequence ID" value="NM_001377352.1"/>
</dbReference>
<dbReference type="RefSeq" id="NP_001364282.1">
    <property type="nucleotide sequence ID" value="NM_001377353.1"/>
</dbReference>
<dbReference type="RefSeq" id="NP_001364283.1">
    <property type="nucleotide sequence ID" value="NM_001377354.1"/>
</dbReference>
<dbReference type="RefSeq" id="NP_001364284.1">
    <property type="nucleotide sequence ID" value="NM_001377355.1"/>
</dbReference>
<dbReference type="RefSeq" id="NP_001364285.1">
    <property type="nucleotide sequence ID" value="NM_001377356.1"/>
</dbReference>
<dbReference type="RefSeq" id="NP_001364286.1">
    <property type="nucleotide sequence ID" value="NM_001377357.1"/>
</dbReference>
<dbReference type="RefSeq" id="NP_001364287.1">
    <property type="nucleotide sequence ID" value="NM_001377358.1"/>
</dbReference>
<dbReference type="RefSeq" id="NP_001364288.1">
    <property type="nucleotide sequence ID" value="NM_001377359.1"/>
</dbReference>
<dbReference type="RefSeq" id="NP_001364289.1">
    <property type="nucleotide sequence ID" value="NM_001377360.1"/>
</dbReference>
<dbReference type="RefSeq" id="NP_001364290.1">
    <property type="nucleotide sequence ID" value="NM_001377361.1"/>
</dbReference>
<dbReference type="RefSeq" id="NP_001364291.1">
    <property type="nucleotide sequence ID" value="NM_001377362.1"/>
</dbReference>
<dbReference type="RefSeq" id="NP_001364292.1">
    <property type="nucleotide sequence ID" value="NM_001377363.1"/>
</dbReference>
<dbReference type="RefSeq" id="NP_001364293.1">
    <property type="nucleotide sequence ID" value="NM_001377364.1"/>
</dbReference>
<dbReference type="RefSeq" id="NP_001364309.1">
    <property type="nucleotide sequence ID" value="NM_001377380.1"/>
</dbReference>
<dbReference type="RefSeq" id="NP_065078.1">
    <property type="nucleotide sequence ID" value="NM_020345.4"/>
</dbReference>
<dbReference type="RefSeq" id="XP_005265133.1">
    <property type="nucleotide sequence ID" value="XM_005265076.3"/>
</dbReference>
<dbReference type="RefSeq" id="XP_005265134.1">
    <property type="nucleotide sequence ID" value="XM_005265077.4"/>
</dbReference>
<dbReference type="RefSeq" id="XP_005265135.1">
    <property type="nucleotide sequence ID" value="XM_005265078.3"/>
</dbReference>
<dbReference type="RefSeq" id="XP_024309228.1">
    <property type="nucleotide sequence ID" value="XM_024453460.2"/>
</dbReference>
<dbReference type="RefSeq" id="XP_047303954.1">
    <property type="nucleotide sequence ID" value="XM_047447998.1"/>
</dbReference>
<dbReference type="RefSeq" id="XP_047303955.1">
    <property type="nucleotide sequence ID" value="XM_047447999.1"/>
</dbReference>
<dbReference type="RefSeq" id="XP_054202219.1">
    <property type="nucleotide sequence ID" value="XM_054346244.1"/>
</dbReference>
<dbReference type="RefSeq" id="XP_054202220.1">
    <property type="nucleotide sequence ID" value="XM_054346245.1"/>
</dbReference>
<dbReference type="RefSeq" id="XP_054202221.1">
    <property type="nucleotide sequence ID" value="XM_054346246.1"/>
</dbReference>
<dbReference type="SMR" id="Q9NYS0"/>
<dbReference type="BioGRID" id="118389">
    <property type="interactions" value="16"/>
</dbReference>
<dbReference type="FunCoup" id="Q9NYS0">
    <property type="interactions" value="1555"/>
</dbReference>
<dbReference type="IntAct" id="Q9NYS0">
    <property type="interactions" value="10"/>
</dbReference>
<dbReference type="STRING" id="9606.ENSP00000393785"/>
<dbReference type="iPTMnet" id="Q9NYS0"/>
<dbReference type="PhosphoSitePlus" id="Q9NYS0"/>
<dbReference type="BioMuta" id="NKIRAS1"/>
<dbReference type="DMDM" id="74753075"/>
<dbReference type="jPOST" id="Q9NYS0"/>
<dbReference type="MassIVE" id="Q9NYS0"/>
<dbReference type="PaxDb" id="9606-ENSP00000393785"/>
<dbReference type="PeptideAtlas" id="Q9NYS0"/>
<dbReference type="ProteomicsDB" id="83272"/>
<dbReference type="Pumba" id="Q9NYS0"/>
<dbReference type="Antibodypedia" id="11367">
    <property type="antibodies" value="360 antibodies from 32 providers"/>
</dbReference>
<dbReference type="DNASU" id="28512"/>
<dbReference type="Ensembl" id="ENST00000388759.7">
    <property type="protein sequence ID" value="ENSP00000373411.3"/>
    <property type="gene ID" value="ENSG00000197885.11"/>
</dbReference>
<dbReference type="Ensembl" id="ENST00000416026.2">
    <property type="protein sequence ID" value="ENSP00000394214.2"/>
    <property type="gene ID" value="ENSG00000197885.11"/>
</dbReference>
<dbReference type="Ensembl" id="ENST00000421515.6">
    <property type="protein sequence ID" value="ENSP00000392307.2"/>
    <property type="gene ID" value="ENSG00000197885.11"/>
</dbReference>
<dbReference type="Ensembl" id="ENST00000425478.7">
    <property type="protein sequence ID" value="ENSP00000400385.2"/>
    <property type="gene ID" value="ENSG00000197885.11"/>
</dbReference>
<dbReference type="Ensembl" id="ENST00000443659.6">
    <property type="protein sequence ID" value="ENSP00000393785.2"/>
    <property type="gene ID" value="ENSG00000197885.11"/>
</dbReference>
<dbReference type="Ensembl" id="ENST00000614374.4">
    <property type="protein sequence ID" value="ENSP00000483749.1"/>
    <property type="gene ID" value="ENSG00000197885.11"/>
</dbReference>
<dbReference type="GeneID" id="28512"/>
<dbReference type="KEGG" id="hsa:28512"/>
<dbReference type="MANE-Select" id="ENST00000425478.7">
    <property type="protein sequence ID" value="ENSP00000400385.2"/>
    <property type="RefSeq nucleotide sequence ID" value="NM_020345.4"/>
    <property type="RefSeq protein sequence ID" value="NP_065078.1"/>
</dbReference>
<dbReference type="UCSC" id="uc003ccj.4">
    <property type="organism name" value="human"/>
</dbReference>
<dbReference type="AGR" id="HGNC:17899"/>
<dbReference type="CTD" id="28512"/>
<dbReference type="DisGeNET" id="28512"/>
<dbReference type="GeneCards" id="NKIRAS1"/>
<dbReference type="HGNC" id="HGNC:17899">
    <property type="gene designation" value="NKIRAS1"/>
</dbReference>
<dbReference type="HPA" id="ENSG00000197885">
    <property type="expression patterns" value="Low tissue specificity"/>
</dbReference>
<dbReference type="MalaCards" id="NKIRAS1"/>
<dbReference type="MIM" id="604496">
    <property type="type" value="gene"/>
</dbReference>
<dbReference type="neXtProt" id="NX_Q9NYS0"/>
<dbReference type="OpenTargets" id="ENSG00000197885"/>
<dbReference type="PharmGKB" id="PA134958823"/>
<dbReference type="VEuPathDB" id="HostDB:ENSG00000197885"/>
<dbReference type="eggNOG" id="KOG3883">
    <property type="taxonomic scope" value="Eukaryota"/>
</dbReference>
<dbReference type="GeneTree" id="ENSGT00940000159705"/>
<dbReference type="HOGENOM" id="CLU_041217_17_0_1"/>
<dbReference type="InParanoid" id="Q9NYS0"/>
<dbReference type="OMA" id="IANMHSR"/>
<dbReference type="OrthoDB" id="10002389at2759"/>
<dbReference type="PAN-GO" id="Q9NYS0">
    <property type="GO annotations" value="3 GO annotations based on evolutionary models"/>
</dbReference>
<dbReference type="PhylomeDB" id="Q9NYS0"/>
<dbReference type="TreeFam" id="TF314483"/>
<dbReference type="PathwayCommons" id="Q9NYS0"/>
<dbReference type="Reactome" id="R-HSA-1810476">
    <property type="pathway name" value="RIP-mediated NFkB activation via ZBP1"/>
</dbReference>
<dbReference type="Reactome" id="R-HSA-445989">
    <property type="pathway name" value="TAK1-dependent IKK and NF-kappa-B activation"/>
</dbReference>
<dbReference type="Reactome" id="R-HSA-933542">
    <property type="pathway name" value="TRAF6 mediated NF-kB activation"/>
</dbReference>
<dbReference type="SignaLink" id="Q9NYS0"/>
<dbReference type="BioGRID-ORCS" id="28512">
    <property type="hits" value="15 hits in 1152 CRISPR screens"/>
</dbReference>
<dbReference type="ChiTaRS" id="NKIRAS1">
    <property type="organism name" value="human"/>
</dbReference>
<dbReference type="GenomeRNAi" id="28512"/>
<dbReference type="Pharos" id="Q9NYS0">
    <property type="development level" value="Tbio"/>
</dbReference>
<dbReference type="PRO" id="PR:Q9NYS0"/>
<dbReference type="Proteomes" id="UP000005640">
    <property type="component" value="Chromosome 3"/>
</dbReference>
<dbReference type="RNAct" id="Q9NYS0">
    <property type="molecule type" value="protein"/>
</dbReference>
<dbReference type="Bgee" id="ENSG00000197885">
    <property type="expression patterns" value="Expressed in lateral nuclear group of thalamus and 198 other cell types or tissues"/>
</dbReference>
<dbReference type="ExpressionAtlas" id="Q9NYS0">
    <property type="expression patterns" value="baseline and differential"/>
</dbReference>
<dbReference type="GO" id="GO:0005829">
    <property type="term" value="C:cytosol"/>
    <property type="evidence" value="ECO:0000314"/>
    <property type="project" value="HPA"/>
</dbReference>
<dbReference type="GO" id="GO:0005783">
    <property type="term" value="C:endoplasmic reticulum"/>
    <property type="evidence" value="ECO:0000314"/>
    <property type="project" value="HPA"/>
</dbReference>
<dbReference type="GO" id="GO:0005525">
    <property type="term" value="F:GTP binding"/>
    <property type="evidence" value="ECO:0007669"/>
    <property type="project" value="UniProtKB-KW"/>
</dbReference>
<dbReference type="GO" id="GO:0032794">
    <property type="term" value="F:GTPase activating protein binding"/>
    <property type="evidence" value="ECO:0000318"/>
    <property type="project" value="GO_Central"/>
</dbReference>
<dbReference type="GO" id="GO:0003924">
    <property type="term" value="F:GTPase activity"/>
    <property type="evidence" value="ECO:0000303"/>
    <property type="project" value="UniProtKB"/>
</dbReference>
<dbReference type="GO" id="GO:0048286">
    <property type="term" value="P:lung alveolus development"/>
    <property type="evidence" value="ECO:0007669"/>
    <property type="project" value="Ensembl"/>
</dbReference>
<dbReference type="GO" id="GO:0043124">
    <property type="term" value="P:negative regulation of canonical NF-kappaB signal transduction"/>
    <property type="evidence" value="ECO:0000303"/>
    <property type="project" value="UniProtKB"/>
</dbReference>
<dbReference type="GO" id="GO:0032484">
    <property type="term" value="P:Ral protein signal transduction"/>
    <property type="evidence" value="ECO:0000318"/>
    <property type="project" value="GO_Central"/>
</dbReference>
<dbReference type="GO" id="GO:0010803">
    <property type="term" value="P:regulation of tumor necrosis factor-mediated signaling pathway"/>
    <property type="evidence" value="ECO:0007669"/>
    <property type="project" value="Ensembl"/>
</dbReference>
<dbReference type="GO" id="GO:0043129">
    <property type="term" value="P:surfactant homeostasis"/>
    <property type="evidence" value="ECO:0007669"/>
    <property type="project" value="Ensembl"/>
</dbReference>
<dbReference type="Gene3D" id="3.40.50.300">
    <property type="entry name" value="P-loop containing nucleotide triphosphate hydrolases"/>
    <property type="match status" value="1"/>
</dbReference>
<dbReference type="InterPro" id="IPR042227">
    <property type="entry name" value="KBRS"/>
</dbReference>
<dbReference type="InterPro" id="IPR027417">
    <property type="entry name" value="P-loop_NTPase"/>
</dbReference>
<dbReference type="InterPro" id="IPR005225">
    <property type="entry name" value="Small_GTP-bd"/>
</dbReference>
<dbReference type="InterPro" id="IPR001806">
    <property type="entry name" value="Small_GTPase"/>
</dbReference>
<dbReference type="NCBIfam" id="TIGR00231">
    <property type="entry name" value="small_GTP"/>
    <property type="match status" value="1"/>
</dbReference>
<dbReference type="PANTHER" id="PTHR46152">
    <property type="entry name" value="NF-KAPPA-B INHIBITOR-INTERACTING RAS-LIKE PROTEIN"/>
    <property type="match status" value="1"/>
</dbReference>
<dbReference type="PANTHER" id="PTHR46152:SF1">
    <property type="entry name" value="NF-KAPPA-B INHIBITOR-INTERACTING RAS-LIKE PROTEIN 1"/>
    <property type="match status" value="1"/>
</dbReference>
<dbReference type="Pfam" id="PF00071">
    <property type="entry name" value="Ras"/>
    <property type="match status" value="1"/>
</dbReference>
<dbReference type="PRINTS" id="PR00449">
    <property type="entry name" value="RASTRNSFRMNG"/>
</dbReference>
<dbReference type="SMART" id="SM00175">
    <property type="entry name" value="RAB"/>
    <property type="match status" value="1"/>
</dbReference>
<dbReference type="SMART" id="SM00173">
    <property type="entry name" value="RAS"/>
    <property type="match status" value="1"/>
</dbReference>
<dbReference type="SUPFAM" id="SSF52540">
    <property type="entry name" value="P-loop containing nucleoside triphosphate hydrolases"/>
    <property type="match status" value="1"/>
</dbReference>
<dbReference type="PROSITE" id="PS51419">
    <property type="entry name" value="RAB"/>
    <property type="match status" value="1"/>
</dbReference>
<name>KBRS1_HUMAN</name>
<protein>
    <recommendedName>
        <fullName>NF-kappa-B inhibitor-interacting Ras-like protein 1</fullName>
    </recommendedName>
    <alternativeName>
        <fullName>I-kappa-B-interacting Ras-like protein 1</fullName>
        <shortName>Kappa B-Ras protein 1</shortName>
        <shortName>KappaB-Ras1</shortName>
    </alternativeName>
</protein>
<sequence length="192" mass="21643">MGKGCKVVVCGLLSVGKTAILEQLLYGNHTIGMEDCETMEDVYMASVETDRGVKEQLHLYDTRGLQEGVELPKHYFSFADGFVLVYSVNNLESFQRVELLKKEIDKFKDKKEVAIVVLGNKIDLSEQRQVDAEVAQQWAKSEKVRLWEVTVTDRKTLIEPFTLLASKLSQPQSKSSFPLPGRKNKGNSNSEN</sequence>
<evidence type="ECO:0000250" key="1"/>
<evidence type="ECO:0000256" key="2">
    <source>
        <dbReference type="SAM" id="MobiDB-lite"/>
    </source>
</evidence>
<evidence type="ECO:0000269" key="3">
    <source>
    </source>
</evidence>
<evidence type="ECO:0000269" key="4">
    <source>
    </source>
</evidence>
<evidence type="ECO:0000269" key="5">
    <source>
    </source>
</evidence>
<evidence type="ECO:0000305" key="6"/>
<accession>Q9NYS0</accession>
<accession>Q96K18</accession>
<organism>
    <name type="scientific">Homo sapiens</name>
    <name type="common">Human</name>
    <dbReference type="NCBI Taxonomy" id="9606"/>
    <lineage>
        <taxon>Eukaryota</taxon>
        <taxon>Metazoa</taxon>
        <taxon>Chordata</taxon>
        <taxon>Craniata</taxon>
        <taxon>Vertebrata</taxon>
        <taxon>Euteleostomi</taxon>
        <taxon>Mammalia</taxon>
        <taxon>Eutheria</taxon>
        <taxon>Euarchontoglires</taxon>
        <taxon>Primates</taxon>
        <taxon>Haplorrhini</taxon>
        <taxon>Catarrhini</taxon>
        <taxon>Hominidae</taxon>
        <taxon>Homo</taxon>
    </lineage>
</organism>
<proteinExistence type="evidence at protein level"/>